<keyword id="KW-0456">Lyase</keyword>
<organism>
    <name type="scientific">Vibrio atlanticus (strain LGP32)</name>
    <name type="common">Vibrio splendidus (strain Mel32)</name>
    <dbReference type="NCBI Taxonomy" id="575788"/>
    <lineage>
        <taxon>Bacteria</taxon>
        <taxon>Pseudomonadati</taxon>
        <taxon>Pseudomonadota</taxon>
        <taxon>Gammaproteobacteria</taxon>
        <taxon>Vibrionales</taxon>
        <taxon>Vibrionaceae</taxon>
        <taxon>Vibrio</taxon>
    </lineage>
</organism>
<dbReference type="EC" id="4.2.1.108" evidence="1"/>
<dbReference type="EMBL" id="FM954973">
    <property type="protein sequence ID" value="CAV25297.1"/>
    <property type="molecule type" value="Genomic_DNA"/>
</dbReference>
<dbReference type="SMR" id="B7VQ39"/>
<dbReference type="STRING" id="575788.VS_II0068"/>
<dbReference type="KEGG" id="vsp:VS_II0068"/>
<dbReference type="PATRIC" id="fig|575788.5.peg.66"/>
<dbReference type="eggNOG" id="COG0662">
    <property type="taxonomic scope" value="Bacteria"/>
</dbReference>
<dbReference type="HOGENOM" id="CLU_154525_0_0_6"/>
<dbReference type="UniPathway" id="UPA00067">
    <property type="reaction ID" value="UER00123"/>
</dbReference>
<dbReference type="Proteomes" id="UP000009100">
    <property type="component" value="Chromosome 2"/>
</dbReference>
<dbReference type="GO" id="GO:0033990">
    <property type="term" value="F:ectoine synthase activity"/>
    <property type="evidence" value="ECO:0007669"/>
    <property type="project" value="UniProtKB-EC"/>
</dbReference>
<dbReference type="GO" id="GO:0019491">
    <property type="term" value="P:ectoine biosynthetic process"/>
    <property type="evidence" value="ECO:0007669"/>
    <property type="project" value="UniProtKB-UniRule"/>
</dbReference>
<dbReference type="CDD" id="cd06978">
    <property type="entry name" value="cupin_EctC"/>
    <property type="match status" value="1"/>
</dbReference>
<dbReference type="Gene3D" id="2.60.120.10">
    <property type="entry name" value="Jelly Rolls"/>
    <property type="match status" value="1"/>
</dbReference>
<dbReference type="HAMAP" id="MF_01255">
    <property type="entry name" value="Ectoine_synth"/>
    <property type="match status" value="1"/>
</dbReference>
<dbReference type="InterPro" id="IPR010462">
    <property type="entry name" value="Ectoine_synth"/>
</dbReference>
<dbReference type="InterPro" id="IPR014710">
    <property type="entry name" value="RmlC-like_jellyroll"/>
</dbReference>
<dbReference type="InterPro" id="IPR011051">
    <property type="entry name" value="RmlC_Cupin_sf"/>
</dbReference>
<dbReference type="NCBIfam" id="NF009806">
    <property type="entry name" value="PRK13290.1"/>
    <property type="match status" value="1"/>
</dbReference>
<dbReference type="PANTHER" id="PTHR39289">
    <property type="match status" value="1"/>
</dbReference>
<dbReference type="PANTHER" id="PTHR39289:SF1">
    <property type="entry name" value="L-ECTOINE SYNTHASE"/>
    <property type="match status" value="1"/>
</dbReference>
<dbReference type="Pfam" id="PF06339">
    <property type="entry name" value="Ectoine_synth"/>
    <property type="match status" value="1"/>
</dbReference>
<dbReference type="SUPFAM" id="SSF51182">
    <property type="entry name" value="RmlC-like cupins"/>
    <property type="match status" value="1"/>
</dbReference>
<protein>
    <recommendedName>
        <fullName evidence="1">L-ectoine synthase</fullName>
        <ecNumber evidence="1">4.2.1.108</ecNumber>
    </recommendedName>
    <alternativeName>
        <fullName evidence="1">N-acetyldiaminobutyrate dehydratase</fullName>
    </alternativeName>
</protein>
<sequence>MIVRTLDECRNSERRIVSDNWESTRMLLKDDNMGFSFHITTIYEATETHIHYQNHLESVYCMSGEGEIEVVGGETYPIKPGTLYILDKHDEHYLRAYKYKEMVMACVFNPPITGAEVHDENGVYPLVD</sequence>
<proteinExistence type="inferred from homology"/>
<gene>
    <name evidence="1" type="primary">ectC</name>
    <name type="ordered locus">VS_II0068</name>
</gene>
<comment type="function">
    <text evidence="1">Catalyzes the circularization of gamma-N-acetyl-alpha,gamma-diaminobutyric acid (ADABA) to ectoine (1,4,5,6-tetrahydro-2-methyl-4-pyrimidine carboxylic acid), which is an excellent osmoprotectant.</text>
</comment>
<comment type="catalytic activity">
    <reaction evidence="1">
        <text>(2S)-4-acetamido-2-aminobutanoate = L-ectoine + H2O</text>
        <dbReference type="Rhea" id="RHEA:17281"/>
        <dbReference type="ChEBI" id="CHEBI:15377"/>
        <dbReference type="ChEBI" id="CHEBI:58515"/>
        <dbReference type="ChEBI" id="CHEBI:58929"/>
        <dbReference type="EC" id="4.2.1.108"/>
    </reaction>
</comment>
<comment type="pathway">
    <text evidence="1">Amine and polyamine biosynthesis; ectoine biosynthesis; L-ectoine from L-aspartate 4-semialdehyde: step 3/3.</text>
</comment>
<comment type="similarity">
    <text evidence="1">Belongs to the ectoine synthase family.</text>
</comment>
<name>ECTC_VIBA3</name>
<evidence type="ECO:0000255" key="1">
    <source>
        <dbReference type="HAMAP-Rule" id="MF_01255"/>
    </source>
</evidence>
<reference key="1">
    <citation type="submission" date="2009-02" db="EMBL/GenBank/DDBJ databases">
        <title>Vibrio splendidus str. LGP32 complete genome.</title>
        <authorList>
            <person name="Mazel D."/>
            <person name="Le Roux F."/>
        </authorList>
    </citation>
    <scope>NUCLEOTIDE SEQUENCE [LARGE SCALE GENOMIC DNA]</scope>
    <source>
        <strain>LGP32</strain>
    </source>
</reference>
<feature type="chain" id="PRO_1000165104" description="L-ectoine synthase">
    <location>
        <begin position="1"/>
        <end position="128"/>
    </location>
</feature>
<accession>B7VQ39</accession>